<accession>Q8DBE1</accession>
<comment type="subcellular location">
    <subcellularLocation>
        <location evidence="1">Cytoplasm</location>
    </subcellularLocation>
</comment>
<comment type="similarity">
    <text evidence="1">Belongs to the UPF0294 family.</text>
</comment>
<proteinExistence type="inferred from homology"/>
<name>Y1880_VIBVU</name>
<gene>
    <name type="ordered locus">VV1_1880</name>
</gene>
<dbReference type="EMBL" id="AE016795">
    <property type="protein sequence ID" value="AAO10282.1"/>
    <property type="molecule type" value="Genomic_DNA"/>
</dbReference>
<dbReference type="RefSeq" id="WP_011079782.1">
    <property type="nucleotide sequence ID" value="NC_004459.3"/>
</dbReference>
<dbReference type="SMR" id="Q8DBE1"/>
<dbReference type="KEGG" id="vvu:VV1_1880"/>
<dbReference type="HOGENOM" id="CLU_083563_0_0_6"/>
<dbReference type="Proteomes" id="UP000002275">
    <property type="component" value="Chromosome 1"/>
</dbReference>
<dbReference type="GO" id="GO:0005737">
    <property type="term" value="C:cytoplasm"/>
    <property type="evidence" value="ECO:0007669"/>
    <property type="project" value="UniProtKB-SubCell"/>
</dbReference>
<dbReference type="GO" id="GO:0003824">
    <property type="term" value="F:catalytic activity"/>
    <property type="evidence" value="ECO:0007669"/>
    <property type="project" value="InterPro"/>
</dbReference>
<dbReference type="Gene3D" id="3.60.10.10">
    <property type="entry name" value="Endonuclease/exonuclease/phosphatase"/>
    <property type="match status" value="1"/>
</dbReference>
<dbReference type="HAMAP" id="MF_01119">
    <property type="entry name" value="UPF0294"/>
    <property type="match status" value="1"/>
</dbReference>
<dbReference type="InterPro" id="IPR036691">
    <property type="entry name" value="Endo/exonu/phosph_ase_sf"/>
</dbReference>
<dbReference type="InterPro" id="IPR005135">
    <property type="entry name" value="Endo/exonuclease/phosphatase"/>
</dbReference>
<dbReference type="InterPro" id="IPR022958">
    <property type="entry name" value="UPF0294"/>
</dbReference>
<dbReference type="NCBIfam" id="NF003840">
    <property type="entry name" value="PRK05421.1-2"/>
    <property type="match status" value="1"/>
</dbReference>
<dbReference type="NCBIfam" id="NF003841">
    <property type="entry name" value="PRK05421.1-3"/>
    <property type="match status" value="1"/>
</dbReference>
<dbReference type="NCBIfam" id="NF003842">
    <property type="entry name" value="PRK05421.1-4"/>
    <property type="match status" value="1"/>
</dbReference>
<dbReference type="Pfam" id="PF03372">
    <property type="entry name" value="Exo_endo_phos"/>
    <property type="match status" value="1"/>
</dbReference>
<dbReference type="SUPFAM" id="SSF56219">
    <property type="entry name" value="DNase I-like"/>
    <property type="match status" value="1"/>
</dbReference>
<protein>
    <recommendedName>
        <fullName evidence="1">UPF0294 protein VV1_1880</fullName>
    </recommendedName>
</protein>
<keyword id="KW-0963">Cytoplasm</keyword>
<sequence length="284" mass="31855">MRKRIWVGLPLALVFGGIFAFHTVFHIPEQPEMTTISDGSFNQQLHCYESSTRASIDQEGSLNLLVWNIYKQNRANWQSVLTQMSAGAQLILLQEASLEDGLKRWIASGGWSGEQVNAFKAFDKAAGVLTLGWRKPRLACGYTQLEPWIRLPKSGLYSEYLLSDGQMLIVVNLHAVNFTWGVQEYQQQVNDLIAALKEHPGPAIVAGDFNTWSEKRLQAVTERLENAGLIEVVFSPDQRTRFITGLPLDHVFYKGLEVQKAEAPQTDASDHNPLLVSFTLPTDK</sequence>
<evidence type="ECO:0000255" key="1">
    <source>
        <dbReference type="HAMAP-Rule" id="MF_01119"/>
    </source>
</evidence>
<organism>
    <name type="scientific">Vibrio vulnificus (strain CMCP6)</name>
    <dbReference type="NCBI Taxonomy" id="216895"/>
    <lineage>
        <taxon>Bacteria</taxon>
        <taxon>Pseudomonadati</taxon>
        <taxon>Pseudomonadota</taxon>
        <taxon>Gammaproteobacteria</taxon>
        <taxon>Vibrionales</taxon>
        <taxon>Vibrionaceae</taxon>
        <taxon>Vibrio</taxon>
    </lineage>
</organism>
<feature type="chain" id="PRO_0000074646" description="UPF0294 protein VV1_1880">
    <location>
        <begin position="1"/>
        <end position="284"/>
    </location>
</feature>
<reference key="1">
    <citation type="submission" date="2002-12" db="EMBL/GenBank/DDBJ databases">
        <title>Complete genome sequence of Vibrio vulnificus CMCP6.</title>
        <authorList>
            <person name="Rhee J.H."/>
            <person name="Kim S.Y."/>
            <person name="Chung S.S."/>
            <person name="Kim J.J."/>
            <person name="Moon Y.H."/>
            <person name="Jeong H."/>
            <person name="Choy H.E."/>
        </authorList>
    </citation>
    <scope>NUCLEOTIDE SEQUENCE [LARGE SCALE GENOMIC DNA]</scope>
    <source>
        <strain>CMCP6</strain>
    </source>
</reference>